<organism>
    <name type="scientific">Pectobacterium carotovorum subsp. carotovorum (strain PC1)</name>
    <dbReference type="NCBI Taxonomy" id="561230"/>
    <lineage>
        <taxon>Bacteria</taxon>
        <taxon>Pseudomonadati</taxon>
        <taxon>Pseudomonadota</taxon>
        <taxon>Gammaproteobacteria</taxon>
        <taxon>Enterobacterales</taxon>
        <taxon>Pectobacteriaceae</taxon>
        <taxon>Pectobacterium</taxon>
    </lineage>
</organism>
<reference key="1">
    <citation type="submission" date="2009-07" db="EMBL/GenBank/DDBJ databases">
        <title>Complete sequence of Pectobacterium carotovorum subsp. carotovorum PC1.</title>
        <authorList>
            <consortium name="US DOE Joint Genome Institute"/>
            <person name="Lucas S."/>
            <person name="Copeland A."/>
            <person name="Lapidus A."/>
            <person name="Glavina del Rio T."/>
            <person name="Tice H."/>
            <person name="Bruce D."/>
            <person name="Goodwin L."/>
            <person name="Pitluck S."/>
            <person name="Munk A.C."/>
            <person name="Brettin T."/>
            <person name="Detter J.C."/>
            <person name="Han C."/>
            <person name="Tapia R."/>
            <person name="Larimer F."/>
            <person name="Land M."/>
            <person name="Hauser L."/>
            <person name="Kyrpides N."/>
            <person name="Mikhailova N."/>
            <person name="Balakrishnan V."/>
            <person name="Glasner J."/>
            <person name="Perna N.T."/>
        </authorList>
    </citation>
    <scope>NUCLEOTIDE SEQUENCE [LARGE SCALE GENOMIC DNA]</scope>
    <source>
        <strain>PC1</strain>
    </source>
</reference>
<evidence type="ECO:0000255" key="1">
    <source>
        <dbReference type="HAMAP-Rule" id="MF_01261"/>
    </source>
</evidence>
<protein>
    <recommendedName>
        <fullName evidence="1">Multifunctional CCA protein</fullName>
    </recommendedName>
    <domain>
        <recommendedName>
            <fullName evidence="1">CCA-adding enzyme</fullName>
            <ecNumber evidence="1">2.7.7.72</ecNumber>
        </recommendedName>
        <alternativeName>
            <fullName evidence="1">CCA tRNA nucleotidyltransferase</fullName>
        </alternativeName>
        <alternativeName>
            <fullName evidence="1">tRNA CCA-pyrophosphorylase</fullName>
        </alternativeName>
        <alternativeName>
            <fullName evidence="1">tRNA adenylyl-/cytidylyl-transferase</fullName>
        </alternativeName>
        <alternativeName>
            <fullName evidence="1">tRNA nucleotidyltransferase</fullName>
        </alternativeName>
        <alternativeName>
            <fullName evidence="1">tRNA-NT</fullName>
        </alternativeName>
    </domain>
    <domain>
        <recommendedName>
            <fullName evidence="1">2'-nucleotidase</fullName>
            <ecNumber evidence="1">3.1.3.-</ecNumber>
        </recommendedName>
    </domain>
    <domain>
        <recommendedName>
            <fullName evidence="1">2',3'-cyclic phosphodiesterase</fullName>
            <ecNumber evidence="1">3.1.4.-</ecNumber>
        </recommendedName>
    </domain>
    <domain>
        <recommendedName>
            <fullName evidence="1">Phosphatase</fullName>
            <ecNumber evidence="1">3.1.3.-</ecNumber>
        </recommendedName>
    </domain>
</protein>
<sequence>MKIYLVGGAVRDSLLGLPVTEKDWVVVGATPEDLLAQGYQQVGKDFPVFLHPVSHDEYALARTERKSGKGYTGFVCHAAPDVTLEQDLLRRDLTINAIARTEQGDLIDPYHGRRDLENHVLRHVSDAFSEDPLRVLRVARFAARFAHLGFQIAEETMALMQKMAHEGELAYLTPERVWKETEKALGTSSPDVYFQVLRDCGALAVLFPEIDNLYGVPAPAKWHPEIDTGIHTMMTVAMAARLSPEIDVRFATLCHDLGKGLTPPELWPRHHGHGPAGVKLVEALCQRLRVPNPIRDLAKLVAEYHDLIHTVQVLQPKTLLKLFDAIDVWRKPQRLEQLALTSEADARGRAGFEDTPYPQGDYLREAFRVASQVSSAGVVADGFKGIDVRNELTRRRTQALADWKAQQPDASATS</sequence>
<feature type="chain" id="PRO_1000214132" description="Multifunctional CCA protein">
    <location>
        <begin position="1"/>
        <end position="414"/>
    </location>
</feature>
<feature type="domain" description="HD" evidence="1">
    <location>
        <begin position="228"/>
        <end position="329"/>
    </location>
</feature>
<feature type="binding site" evidence="1">
    <location>
        <position position="8"/>
    </location>
    <ligand>
        <name>ATP</name>
        <dbReference type="ChEBI" id="CHEBI:30616"/>
    </ligand>
</feature>
<feature type="binding site" evidence="1">
    <location>
        <position position="8"/>
    </location>
    <ligand>
        <name>CTP</name>
        <dbReference type="ChEBI" id="CHEBI:37563"/>
    </ligand>
</feature>
<feature type="binding site" evidence="1">
    <location>
        <position position="11"/>
    </location>
    <ligand>
        <name>ATP</name>
        <dbReference type="ChEBI" id="CHEBI:30616"/>
    </ligand>
</feature>
<feature type="binding site" evidence="1">
    <location>
        <position position="11"/>
    </location>
    <ligand>
        <name>CTP</name>
        <dbReference type="ChEBI" id="CHEBI:37563"/>
    </ligand>
</feature>
<feature type="binding site" evidence="1">
    <location>
        <position position="21"/>
    </location>
    <ligand>
        <name>Mg(2+)</name>
        <dbReference type="ChEBI" id="CHEBI:18420"/>
    </ligand>
</feature>
<feature type="binding site" evidence="1">
    <location>
        <position position="23"/>
    </location>
    <ligand>
        <name>Mg(2+)</name>
        <dbReference type="ChEBI" id="CHEBI:18420"/>
    </ligand>
</feature>
<feature type="binding site" evidence="1">
    <location>
        <position position="91"/>
    </location>
    <ligand>
        <name>ATP</name>
        <dbReference type="ChEBI" id="CHEBI:30616"/>
    </ligand>
</feature>
<feature type="binding site" evidence="1">
    <location>
        <position position="91"/>
    </location>
    <ligand>
        <name>CTP</name>
        <dbReference type="ChEBI" id="CHEBI:37563"/>
    </ligand>
</feature>
<feature type="binding site" evidence="1">
    <location>
        <position position="137"/>
    </location>
    <ligand>
        <name>ATP</name>
        <dbReference type="ChEBI" id="CHEBI:30616"/>
    </ligand>
</feature>
<feature type="binding site" evidence="1">
    <location>
        <position position="137"/>
    </location>
    <ligand>
        <name>CTP</name>
        <dbReference type="ChEBI" id="CHEBI:37563"/>
    </ligand>
</feature>
<feature type="binding site" evidence="1">
    <location>
        <position position="140"/>
    </location>
    <ligand>
        <name>ATP</name>
        <dbReference type="ChEBI" id="CHEBI:30616"/>
    </ligand>
</feature>
<feature type="binding site" evidence="1">
    <location>
        <position position="140"/>
    </location>
    <ligand>
        <name>CTP</name>
        <dbReference type="ChEBI" id="CHEBI:37563"/>
    </ligand>
</feature>
<keyword id="KW-0067">ATP-binding</keyword>
<keyword id="KW-0378">Hydrolase</keyword>
<keyword id="KW-0460">Magnesium</keyword>
<keyword id="KW-0479">Metal-binding</keyword>
<keyword id="KW-0511">Multifunctional enzyme</keyword>
<keyword id="KW-0533">Nickel</keyword>
<keyword id="KW-0547">Nucleotide-binding</keyword>
<keyword id="KW-0548">Nucleotidyltransferase</keyword>
<keyword id="KW-0692">RNA repair</keyword>
<keyword id="KW-0694">RNA-binding</keyword>
<keyword id="KW-0808">Transferase</keyword>
<keyword id="KW-0819">tRNA processing</keyword>
<dbReference type="EC" id="2.7.7.72" evidence="1"/>
<dbReference type="EC" id="3.1.3.-" evidence="1"/>
<dbReference type="EC" id="3.1.4.-" evidence="1"/>
<dbReference type="EMBL" id="CP001657">
    <property type="protein sequence ID" value="ACT14424.1"/>
    <property type="molecule type" value="Genomic_DNA"/>
</dbReference>
<dbReference type="RefSeq" id="WP_015841554.1">
    <property type="nucleotide sequence ID" value="NC_012917.1"/>
</dbReference>
<dbReference type="STRING" id="561230.PC1_3408"/>
<dbReference type="KEGG" id="pct:PC1_3408"/>
<dbReference type="eggNOG" id="COG0617">
    <property type="taxonomic scope" value="Bacteria"/>
</dbReference>
<dbReference type="HOGENOM" id="CLU_015961_1_1_6"/>
<dbReference type="OrthoDB" id="9805698at2"/>
<dbReference type="Proteomes" id="UP000002736">
    <property type="component" value="Chromosome"/>
</dbReference>
<dbReference type="GO" id="GO:0005524">
    <property type="term" value="F:ATP binding"/>
    <property type="evidence" value="ECO:0007669"/>
    <property type="project" value="UniProtKB-UniRule"/>
</dbReference>
<dbReference type="GO" id="GO:0004810">
    <property type="term" value="F:CCA tRNA nucleotidyltransferase activity"/>
    <property type="evidence" value="ECO:0007669"/>
    <property type="project" value="UniProtKB-UniRule"/>
</dbReference>
<dbReference type="GO" id="GO:0004112">
    <property type="term" value="F:cyclic-nucleotide phosphodiesterase activity"/>
    <property type="evidence" value="ECO:0007669"/>
    <property type="project" value="UniProtKB-UniRule"/>
</dbReference>
<dbReference type="GO" id="GO:0000287">
    <property type="term" value="F:magnesium ion binding"/>
    <property type="evidence" value="ECO:0007669"/>
    <property type="project" value="UniProtKB-UniRule"/>
</dbReference>
<dbReference type="GO" id="GO:0016791">
    <property type="term" value="F:phosphatase activity"/>
    <property type="evidence" value="ECO:0007669"/>
    <property type="project" value="UniProtKB-UniRule"/>
</dbReference>
<dbReference type="GO" id="GO:0000049">
    <property type="term" value="F:tRNA binding"/>
    <property type="evidence" value="ECO:0007669"/>
    <property type="project" value="UniProtKB-UniRule"/>
</dbReference>
<dbReference type="GO" id="GO:0042245">
    <property type="term" value="P:RNA repair"/>
    <property type="evidence" value="ECO:0007669"/>
    <property type="project" value="UniProtKB-KW"/>
</dbReference>
<dbReference type="GO" id="GO:0001680">
    <property type="term" value="P:tRNA 3'-terminal CCA addition"/>
    <property type="evidence" value="ECO:0007669"/>
    <property type="project" value="UniProtKB-UniRule"/>
</dbReference>
<dbReference type="CDD" id="cd00077">
    <property type="entry name" value="HDc"/>
    <property type="match status" value="1"/>
</dbReference>
<dbReference type="FunFam" id="1.10.3090.10:FF:000001">
    <property type="entry name" value="Multifunctional CCA protein"/>
    <property type="match status" value="1"/>
</dbReference>
<dbReference type="FunFam" id="3.30.460.10:FF:000016">
    <property type="entry name" value="Multifunctional CCA protein"/>
    <property type="match status" value="1"/>
</dbReference>
<dbReference type="Gene3D" id="3.30.460.10">
    <property type="entry name" value="Beta Polymerase, domain 2"/>
    <property type="match status" value="1"/>
</dbReference>
<dbReference type="Gene3D" id="1.10.3090.10">
    <property type="entry name" value="cca-adding enzyme, domain 2"/>
    <property type="match status" value="1"/>
</dbReference>
<dbReference type="HAMAP" id="MF_01261">
    <property type="entry name" value="CCA_bact_type1"/>
    <property type="match status" value="1"/>
</dbReference>
<dbReference type="HAMAP" id="MF_01262">
    <property type="entry name" value="CCA_bact_type2"/>
    <property type="match status" value="1"/>
</dbReference>
<dbReference type="InterPro" id="IPR012006">
    <property type="entry name" value="CCA_bact"/>
</dbReference>
<dbReference type="InterPro" id="IPR003607">
    <property type="entry name" value="HD/PDEase_dom"/>
</dbReference>
<dbReference type="InterPro" id="IPR006674">
    <property type="entry name" value="HD_domain"/>
</dbReference>
<dbReference type="InterPro" id="IPR043519">
    <property type="entry name" value="NT_sf"/>
</dbReference>
<dbReference type="InterPro" id="IPR002646">
    <property type="entry name" value="PolA_pol_head_dom"/>
</dbReference>
<dbReference type="InterPro" id="IPR032828">
    <property type="entry name" value="PolyA_RNA-bd"/>
</dbReference>
<dbReference type="InterPro" id="IPR050124">
    <property type="entry name" value="tRNA_CCA-adding_enzyme"/>
</dbReference>
<dbReference type="NCBIfam" id="NF008137">
    <property type="entry name" value="PRK10885.1"/>
    <property type="match status" value="1"/>
</dbReference>
<dbReference type="PANTHER" id="PTHR47545">
    <property type="entry name" value="MULTIFUNCTIONAL CCA PROTEIN"/>
    <property type="match status" value="1"/>
</dbReference>
<dbReference type="PANTHER" id="PTHR47545:SF1">
    <property type="entry name" value="MULTIFUNCTIONAL CCA PROTEIN"/>
    <property type="match status" value="1"/>
</dbReference>
<dbReference type="Pfam" id="PF01966">
    <property type="entry name" value="HD"/>
    <property type="match status" value="1"/>
</dbReference>
<dbReference type="Pfam" id="PF01743">
    <property type="entry name" value="PolyA_pol"/>
    <property type="match status" value="1"/>
</dbReference>
<dbReference type="Pfam" id="PF12627">
    <property type="entry name" value="PolyA_pol_RNAbd"/>
    <property type="match status" value="1"/>
</dbReference>
<dbReference type="PIRSF" id="PIRSF000813">
    <property type="entry name" value="CCA_bact"/>
    <property type="match status" value="1"/>
</dbReference>
<dbReference type="SUPFAM" id="SSF81301">
    <property type="entry name" value="Nucleotidyltransferase"/>
    <property type="match status" value="1"/>
</dbReference>
<dbReference type="SUPFAM" id="SSF81891">
    <property type="entry name" value="Poly A polymerase C-terminal region-like"/>
    <property type="match status" value="1"/>
</dbReference>
<dbReference type="PROSITE" id="PS51831">
    <property type="entry name" value="HD"/>
    <property type="match status" value="1"/>
</dbReference>
<comment type="function">
    <text evidence="1">Catalyzes the addition and repair of the essential 3'-terminal CCA sequence in tRNAs without using a nucleic acid template. Adds these three nucleotides in the order of C, C, and A to the tRNA nucleotide-73, using CTP and ATP as substrates and producing inorganic pyrophosphate. tRNA 3'-terminal CCA addition is required both for tRNA processing and repair. Also involved in tRNA surveillance by mediating tandem CCA addition to generate a CCACCA at the 3' terminus of unstable tRNAs. While stable tRNAs receive only 3'-terminal CCA, unstable tRNAs are marked with CCACCA and rapidly degraded.</text>
</comment>
<comment type="catalytic activity">
    <reaction evidence="1">
        <text>a tRNA precursor + 2 CTP + ATP = a tRNA with a 3' CCA end + 3 diphosphate</text>
        <dbReference type="Rhea" id="RHEA:14433"/>
        <dbReference type="Rhea" id="RHEA-COMP:10465"/>
        <dbReference type="Rhea" id="RHEA-COMP:10468"/>
        <dbReference type="ChEBI" id="CHEBI:30616"/>
        <dbReference type="ChEBI" id="CHEBI:33019"/>
        <dbReference type="ChEBI" id="CHEBI:37563"/>
        <dbReference type="ChEBI" id="CHEBI:74896"/>
        <dbReference type="ChEBI" id="CHEBI:83071"/>
        <dbReference type="EC" id="2.7.7.72"/>
    </reaction>
</comment>
<comment type="catalytic activity">
    <reaction evidence="1">
        <text>a tRNA with a 3' CCA end + 2 CTP + ATP = a tRNA with a 3' CCACCA end + 3 diphosphate</text>
        <dbReference type="Rhea" id="RHEA:76235"/>
        <dbReference type="Rhea" id="RHEA-COMP:10468"/>
        <dbReference type="Rhea" id="RHEA-COMP:18655"/>
        <dbReference type="ChEBI" id="CHEBI:30616"/>
        <dbReference type="ChEBI" id="CHEBI:33019"/>
        <dbReference type="ChEBI" id="CHEBI:37563"/>
        <dbReference type="ChEBI" id="CHEBI:83071"/>
        <dbReference type="ChEBI" id="CHEBI:195187"/>
    </reaction>
    <physiologicalReaction direction="left-to-right" evidence="1">
        <dbReference type="Rhea" id="RHEA:76236"/>
    </physiologicalReaction>
</comment>
<comment type="cofactor">
    <cofactor evidence="1">
        <name>Mg(2+)</name>
        <dbReference type="ChEBI" id="CHEBI:18420"/>
    </cofactor>
    <text evidence="1">Magnesium is required for nucleotidyltransferase activity.</text>
</comment>
<comment type="cofactor">
    <cofactor evidence="1">
        <name>Ni(2+)</name>
        <dbReference type="ChEBI" id="CHEBI:49786"/>
    </cofactor>
    <text evidence="1">Nickel for phosphatase activity.</text>
</comment>
<comment type="subunit">
    <text evidence="1">Monomer. Can also form homodimers and oligomers.</text>
</comment>
<comment type="domain">
    <text evidence="1">Comprises two domains: an N-terminal domain containing the nucleotidyltransferase activity and a C-terminal HD domain associated with both phosphodiesterase and phosphatase activities.</text>
</comment>
<comment type="miscellaneous">
    <text evidence="1">A single active site specifically recognizes both ATP and CTP and is responsible for their addition.</text>
</comment>
<comment type="similarity">
    <text evidence="1">Belongs to the tRNA nucleotidyltransferase/poly(A) polymerase family. Bacterial CCA-adding enzyme type 1 subfamily.</text>
</comment>
<name>CCA_PECCP</name>
<proteinExistence type="inferred from homology"/>
<accession>C6DDL7</accession>
<gene>
    <name evidence="1" type="primary">cca</name>
    <name type="ordered locus">PC1_3408</name>
</gene>